<gene>
    <name evidence="1" type="primary">NS</name>
</gene>
<evidence type="ECO:0000255" key="1">
    <source>
        <dbReference type="HAMAP-Rule" id="MF_04067"/>
    </source>
</evidence>
<evidence type="ECO:0000305" key="2"/>
<dbReference type="EMBL" id="AB283001">
    <property type="protein sequence ID" value="BAF74589.1"/>
    <property type="molecule type" value="Viral_cRNA"/>
</dbReference>
<dbReference type="EMBL" id="D00029">
    <property type="protein sequence ID" value="BAA24045.1"/>
    <property type="status" value="ALT_FRAME"/>
    <property type="molecule type" value="Genomic_RNA"/>
</dbReference>
<dbReference type="RefSeq" id="YP_002302328.1">
    <molecule id="Q01640-1"/>
    <property type="nucleotide sequence ID" value="NC_006306.2"/>
</dbReference>
<dbReference type="SMR" id="Q01640"/>
<dbReference type="DNASU" id="7011833"/>
<dbReference type="KEGG" id="vg:7011833"/>
<dbReference type="OrthoDB" id="37636at10239"/>
<dbReference type="Proteomes" id="UP000008286">
    <property type="component" value="Genome"/>
</dbReference>
<dbReference type="GO" id="GO:0042025">
    <property type="term" value="C:host cell nucleus"/>
    <property type="evidence" value="ECO:0007669"/>
    <property type="project" value="UniProtKB-SubCell"/>
</dbReference>
<dbReference type="GO" id="GO:0044423">
    <property type="term" value="C:virion component"/>
    <property type="evidence" value="ECO:0007669"/>
    <property type="project" value="UniProtKB-UniRule"/>
</dbReference>
<dbReference type="GO" id="GO:0039675">
    <property type="term" value="P:exit of virus from host cell nucleus through nuclear pore"/>
    <property type="evidence" value="ECO:0007669"/>
    <property type="project" value="UniProtKB-UniRule"/>
</dbReference>
<dbReference type="HAMAP" id="MF_04067">
    <property type="entry name" value="INFV_NEP"/>
    <property type="match status" value="1"/>
</dbReference>
<dbReference type="InterPro" id="IPR005188">
    <property type="entry name" value="Flu_C_NS2"/>
</dbReference>
<dbReference type="InterPro" id="IPR000968">
    <property type="entry name" value="Flu_NS2"/>
</dbReference>
<dbReference type="Pfam" id="PF03555">
    <property type="entry name" value="Flu_C_NS2"/>
    <property type="match status" value="1"/>
</dbReference>
<keyword id="KW-0025">Alternative splicing</keyword>
<keyword id="KW-1048">Host nucleus</keyword>
<keyword id="KW-0945">Host-virus interaction</keyword>
<keyword id="KW-1185">Reference proteome</keyword>
<keyword id="KW-0813">Transport</keyword>
<keyword id="KW-0946">Virion</keyword>
<protein>
    <recommendedName>
        <fullName evidence="1">Nuclear export protein</fullName>
        <shortName evidence="1">NEP</shortName>
    </recommendedName>
    <alternativeName>
        <fullName evidence="1">Non-structural protein 2</fullName>
        <shortName evidence="1">NS2</shortName>
    </alternativeName>
</protein>
<proteinExistence type="evidence at transcript level"/>
<sequence>MSDKTVKSTNLMAFVATKMLERQEDLDTCTEMQVEKMKTSTKARLKTESSFAPRTWEDAIKDEILRRSVDTSSLDKWPELKQELENVSDALKADSLWLPMKSLSLYSKVSNQEPSSIPIGEMKHQILTRLKLICSRLEKLDLNLSKAVLGIQNSEDLILIIYNRDVCKNTILMIKSLCNSLI</sequence>
<reference key="1">
    <citation type="journal article" date="2007" name="J. Virol.">
        <title>A mutation on influenza C virus M1 protein affects virion morphology by altering the membrane affinity of the protein.</title>
        <authorList>
            <person name="Muraki Y."/>
            <person name="Murata T."/>
            <person name="Takashita E."/>
            <person name="Matsuzaki Y."/>
            <person name="Sugawara K."/>
            <person name="Hongo S."/>
        </authorList>
    </citation>
    <scope>NUCLEOTIDE SEQUENCE [MRNA]</scope>
</reference>
<reference key="2">
    <citation type="journal article" date="1986" name="Virology">
        <title>Epidemiology of influenza C virus in man: multiple evolutionary lineages and low rate of change.</title>
        <authorList>
            <person name="Buonagurio D.A."/>
            <person name="Nakada S."/>
            <person name="Fitch W.M."/>
            <person name="Palese P."/>
        </authorList>
    </citation>
    <scope>NUCLEOTIDE SEQUENCE [GENOMIC RNA] OF 6-182</scope>
</reference>
<reference key="3">
    <citation type="journal article" date="2000" name="J. Gen. Virol.">
        <title>Phylogenetic analysis of influenza C virus nonstructural (NS) protein genes and identification of the NS2 protein.</title>
        <authorList>
            <person name="Alamgir A.S.M."/>
            <person name="Matsuzaki Y."/>
            <person name="Hongo S."/>
            <person name="Tsuchiya E."/>
            <person name="Sugawara K."/>
            <person name="Muraki Y."/>
            <person name="Nakamura K."/>
        </authorList>
    </citation>
    <scope>IDENTIFICATION OF FRAMESHIFT</scope>
</reference>
<feature type="chain" id="PRO_0000079017" description="Nuclear export protein">
    <location>
        <begin position="1"/>
        <end position="182"/>
    </location>
</feature>
<feature type="short sequence motif" description="Nuclear export signal" evidence="1">
    <location>
        <begin position="96"/>
        <end position="105"/>
    </location>
</feature>
<feature type="short sequence motif" description="Nuclear export signal" evidence="1">
    <location>
        <begin position="122"/>
        <end position="132"/>
    </location>
</feature>
<feature type="sequence variant">
    <original>N</original>
    <variation>T</variation>
    <location>
        <position position="169"/>
    </location>
</feature>
<organism>
    <name type="scientific">Influenza C virus (strain C/Ann Arbor/1/1950)</name>
    <dbReference type="NCBI Taxonomy" id="11553"/>
    <lineage>
        <taxon>Viruses</taxon>
        <taxon>Riboviria</taxon>
        <taxon>Orthornavirae</taxon>
        <taxon>Negarnaviricota</taxon>
        <taxon>Polyploviricotina</taxon>
        <taxon>Insthoviricetes</taxon>
        <taxon>Articulavirales</taxon>
        <taxon>Orthomyxoviridae</taxon>
        <taxon>Gammainfluenzavirus</taxon>
        <taxon>Gammainfluenzavirus influenzae</taxon>
        <taxon>Influenza C virus</taxon>
    </lineage>
</organism>
<name>NEP_INCAA</name>
<organismHost>
    <name type="scientific">Homo sapiens</name>
    <name type="common">Human</name>
    <dbReference type="NCBI Taxonomy" id="9606"/>
</organismHost>
<organismHost>
    <name type="scientific">Sus scrofa</name>
    <name type="common">Pig</name>
    <dbReference type="NCBI Taxonomy" id="9823"/>
</organismHost>
<accession>Q01640</accession>
<accession>A7BHX7</accession>
<comment type="function">
    <text evidence="1">Mediates the nuclear export of encapsidated genomic RNAs (ribonucleoproteins, RNPs). Acts as an adapter between viral RNPs complexes and the nuclear export machinery of the cell. Possesses no intrinsic RNA-binding activity, but includes a C-terminal M1-binding domain. This domain is believed to allow recognition of RNPs bound to the protein M1. Since protein M1 is not available in large quantities before late stages of infection, such an indirect recognition mechanism probably ensures that genomic RNPs are not exported from the host nucleus until sufficient quantities of viral mRNA and progeny genomic RNA have been synthesized. Furthermore, the RNPs enter the host cytoplasm only when associated with the M1 protein that is necessary to guide them to the plasma membrane. May down-regulate viral RNA synthesis when overproduced.</text>
</comment>
<comment type="subunit">
    <text evidence="1">Interacts with protein M1. May interact with host nucleoporin RAB/HRB and exportin XPO1/CRM1.</text>
</comment>
<comment type="subcellular location">
    <subcellularLocation>
        <location evidence="1">Virion</location>
    </subcellularLocation>
    <subcellularLocation>
        <location evidence="1">Host nucleus</location>
    </subcellularLocation>
</comment>
<comment type="alternative products">
    <event type="alternative splicing"/>
    <isoform>
        <id>Q01640-1</id>
        <name>NEP</name>
        <name>NS2</name>
        <sequence type="displayed"/>
    </isoform>
    <isoform>
        <id>Q01639-1</id>
        <name>NS1</name>
        <sequence type="external"/>
    </isoform>
</comment>
<comment type="similarity">
    <text evidence="1">Belongs to the influenza viruses NEP family.</text>
</comment>
<comment type="sequence caution" evidence="2">
    <conflict type="frameshift">
        <sequence resource="EMBL-CDS" id="BAA24045"/>
    </conflict>
</comment>